<gene>
    <name evidence="1" type="primary">dnaA</name>
    <name type="ordered locus">P9515_06291</name>
</gene>
<keyword id="KW-0067">ATP-binding</keyword>
<keyword id="KW-0963">Cytoplasm</keyword>
<keyword id="KW-0235">DNA replication</keyword>
<keyword id="KW-0238">DNA-binding</keyword>
<keyword id="KW-0446">Lipid-binding</keyword>
<keyword id="KW-0547">Nucleotide-binding</keyword>
<dbReference type="EMBL" id="CP000552">
    <property type="protein sequence ID" value="ABM71838.1"/>
    <property type="molecule type" value="Genomic_DNA"/>
</dbReference>
<dbReference type="RefSeq" id="WP_011819943.1">
    <property type="nucleotide sequence ID" value="NC_008817.1"/>
</dbReference>
<dbReference type="SMR" id="A2BVM7"/>
<dbReference type="STRING" id="167542.P9515_06291"/>
<dbReference type="GeneID" id="60201038"/>
<dbReference type="KEGG" id="pmc:P9515_06291"/>
<dbReference type="eggNOG" id="COG0593">
    <property type="taxonomic scope" value="Bacteria"/>
</dbReference>
<dbReference type="HOGENOM" id="CLU_026910_3_1_3"/>
<dbReference type="OrthoDB" id="9807019at2"/>
<dbReference type="Proteomes" id="UP000001589">
    <property type="component" value="Chromosome"/>
</dbReference>
<dbReference type="GO" id="GO:0005737">
    <property type="term" value="C:cytoplasm"/>
    <property type="evidence" value="ECO:0007669"/>
    <property type="project" value="UniProtKB-SubCell"/>
</dbReference>
<dbReference type="GO" id="GO:0005886">
    <property type="term" value="C:plasma membrane"/>
    <property type="evidence" value="ECO:0007669"/>
    <property type="project" value="TreeGrafter"/>
</dbReference>
<dbReference type="GO" id="GO:0005524">
    <property type="term" value="F:ATP binding"/>
    <property type="evidence" value="ECO:0007669"/>
    <property type="project" value="UniProtKB-UniRule"/>
</dbReference>
<dbReference type="GO" id="GO:0016887">
    <property type="term" value="F:ATP hydrolysis activity"/>
    <property type="evidence" value="ECO:0007669"/>
    <property type="project" value="InterPro"/>
</dbReference>
<dbReference type="GO" id="GO:0003688">
    <property type="term" value="F:DNA replication origin binding"/>
    <property type="evidence" value="ECO:0007669"/>
    <property type="project" value="UniProtKB-UniRule"/>
</dbReference>
<dbReference type="GO" id="GO:0008289">
    <property type="term" value="F:lipid binding"/>
    <property type="evidence" value="ECO:0007669"/>
    <property type="project" value="UniProtKB-KW"/>
</dbReference>
<dbReference type="GO" id="GO:0006270">
    <property type="term" value="P:DNA replication initiation"/>
    <property type="evidence" value="ECO:0007669"/>
    <property type="project" value="UniProtKB-UniRule"/>
</dbReference>
<dbReference type="GO" id="GO:0006275">
    <property type="term" value="P:regulation of DNA replication"/>
    <property type="evidence" value="ECO:0007669"/>
    <property type="project" value="UniProtKB-UniRule"/>
</dbReference>
<dbReference type="CDD" id="cd00009">
    <property type="entry name" value="AAA"/>
    <property type="match status" value="1"/>
</dbReference>
<dbReference type="CDD" id="cd06571">
    <property type="entry name" value="Bac_DnaA_C"/>
    <property type="match status" value="1"/>
</dbReference>
<dbReference type="FunFam" id="3.40.50.300:FF:000668">
    <property type="entry name" value="Chromosomal replication initiator protein DnaA"/>
    <property type="match status" value="1"/>
</dbReference>
<dbReference type="Gene3D" id="1.10.1750.10">
    <property type="match status" value="1"/>
</dbReference>
<dbReference type="Gene3D" id="1.10.8.60">
    <property type="match status" value="1"/>
</dbReference>
<dbReference type="Gene3D" id="3.30.300.180">
    <property type="match status" value="1"/>
</dbReference>
<dbReference type="Gene3D" id="3.40.50.300">
    <property type="entry name" value="P-loop containing nucleotide triphosphate hydrolases"/>
    <property type="match status" value="1"/>
</dbReference>
<dbReference type="HAMAP" id="MF_00377">
    <property type="entry name" value="DnaA_bact"/>
    <property type="match status" value="1"/>
</dbReference>
<dbReference type="InterPro" id="IPR003593">
    <property type="entry name" value="AAA+_ATPase"/>
</dbReference>
<dbReference type="InterPro" id="IPR001957">
    <property type="entry name" value="Chromosome_initiator_DnaA"/>
</dbReference>
<dbReference type="InterPro" id="IPR020591">
    <property type="entry name" value="Chromosome_initiator_DnaA-like"/>
</dbReference>
<dbReference type="InterPro" id="IPR018312">
    <property type="entry name" value="Chromosome_initiator_DnaA_CS"/>
</dbReference>
<dbReference type="InterPro" id="IPR013159">
    <property type="entry name" value="DnaA_C"/>
</dbReference>
<dbReference type="InterPro" id="IPR013317">
    <property type="entry name" value="DnaA_dom"/>
</dbReference>
<dbReference type="InterPro" id="IPR024633">
    <property type="entry name" value="DnaA_N_dom"/>
</dbReference>
<dbReference type="InterPro" id="IPR038454">
    <property type="entry name" value="DnaA_N_sf"/>
</dbReference>
<dbReference type="InterPro" id="IPR027417">
    <property type="entry name" value="P-loop_NTPase"/>
</dbReference>
<dbReference type="InterPro" id="IPR010921">
    <property type="entry name" value="Trp_repressor/repl_initiator"/>
</dbReference>
<dbReference type="NCBIfam" id="TIGR00362">
    <property type="entry name" value="DnaA"/>
    <property type="match status" value="1"/>
</dbReference>
<dbReference type="PANTHER" id="PTHR30050">
    <property type="entry name" value="CHROMOSOMAL REPLICATION INITIATOR PROTEIN DNAA"/>
    <property type="match status" value="1"/>
</dbReference>
<dbReference type="PANTHER" id="PTHR30050:SF2">
    <property type="entry name" value="CHROMOSOMAL REPLICATION INITIATOR PROTEIN DNAA"/>
    <property type="match status" value="1"/>
</dbReference>
<dbReference type="Pfam" id="PF00308">
    <property type="entry name" value="Bac_DnaA"/>
    <property type="match status" value="1"/>
</dbReference>
<dbReference type="Pfam" id="PF08299">
    <property type="entry name" value="Bac_DnaA_C"/>
    <property type="match status" value="1"/>
</dbReference>
<dbReference type="Pfam" id="PF11638">
    <property type="entry name" value="DnaA_N"/>
    <property type="match status" value="1"/>
</dbReference>
<dbReference type="PRINTS" id="PR00051">
    <property type="entry name" value="DNAA"/>
</dbReference>
<dbReference type="SMART" id="SM00382">
    <property type="entry name" value="AAA"/>
    <property type="match status" value="1"/>
</dbReference>
<dbReference type="SMART" id="SM00760">
    <property type="entry name" value="Bac_DnaA_C"/>
    <property type="match status" value="1"/>
</dbReference>
<dbReference type="SUPFAM" id="SSF52540">
    <property type="entry name" value="P-loop containing nucleoside triphosphate hydrolases"/>
    <property type="match status" value="1"/>
</dbReference>
<dbReference type="SUPFAM" id="SSF48295">
    <property type="entry name" value="TrpR-like"/>
    <property type="match status" value="1"/>
</dbReference>
<dbReference type="PROSITE" id="PS01008">
    <property type="entry name" value="DNAA"/>
    <property type="match status" value="1"/>
</dbReference>
<proteinExistence type="inferred from homology"/>
<organism>
    <name type="scientific">Prochlorococcus marinus (strain MIT 9515)</name>
    <dbReference type="NCBI Taxonomy" id="167542"/>
    <lineage>
        <taxon>Bacteria</taxon>
        <taxon>Bacillati</taxon>
        <taxon>Cyanobacteriota</taxon>
        <taxon>Cyanophyceae</taxon>
        <taxon>Synechococcales</taxon>
        <taxon>Prochlorococcaceae</taxon>
        <taxon>Prochlorococcus</taxon>
    </lineage>
</organism>
<evidence type="ECO:0000255" key="1">
    <source>
        <dbReference type="HAMAP-Rule" id="MF_00377"/>
    </source>
</evidence>
<evidence type="ECO:0000256" key="2">
    <source>
        <dbReference type="SAM" id="MobiDB-lite"/>
    </source>
</evidence>
<comment type="function">
    <text evidence="1">Plays an essential role in the initiation and regulation of chromosomal replication. ATP-DnaA binds to the origin of replication (oriC) to initiate formation of the DNA replication initiation complex once per cell cycle. Binds the DnaA box (a 9 base pair repeat at the origin) and separates the double-stranded (ds)DNA. Forms a right-handed helical filament on oriC DNA; dsDNA binds to the exterior of the filament while single-stranded (ss)DNA is stabiized in the filament's interior. The ATP-DnaA-oriC complex binds and stabilizes one strand of the AT-rich DNA unwinding element (DUE), permitting loading of DNA polymerase. After initiation quickly degrades to an ADP-DnaA complex that is not apt for DNA replication. Binds acidic phospholipids.</text>
</comment>
<comment type="subunit">
    <text evidence="1">Oligomerizes as a right-handed, spiral filament on DNA at oriC.</text>
</comment>
<comment type="subcellular location">
    <subcellularLocation>
        <location evidence="1">Cytoplasm</location>
    </subcellularLocation>
</comment>
<comment type="domain">
    <text evidence="1">Domain I is involved in oligomerization and binding regulators, domain II is flexibile and of varying length in different bacteria, domain III forms the AAA+ region, while domain IV binds dsDNA.</text>
</comment>
<comment type="similarity">
    <text evidence="1">Belongs to the DnaA family.</text>
</comment>
<name>DNAA_PROM5</name>
<accession>A2BVM7</accession>
<reference key="1">
    <citation type="journal article" date="2007" name="PLoS Genet.">
        <title>Patterns and implications of gene gain and loss in the evolution of Prochlorococcus.</title>
        <authorList>
            <person name="Kettler G.C."/>
            <person name="Martiny A.C."/>
            <person name="Huang K."/>
            <person name="Zucker J."/>
            <person name="Coleman M.L."/>
            <person name="Rodrigue S."/>
            <person name="Chen F."/>
            <person name="Lapidus A."/>
            <person name="Ferriera S."/>
            <person name="Johnson J."/>
            <person name="Steglich C."/>
            <person name="Church G.M."/>
            <person name="Richardson P."/>
            <person name="Chisholm S.W."/>
        </authorList>
    </citation>
    <scope>NUCLEOTIDE SEQUENCE [LARGE SCALE GENOMIC DNA]</scope>
    <source>
        <strain>MIT 9515</strain>
    </source>
</reference>
<protein>
    <recommendedName>
        <fullName evidence="1">Chromosomal replication initiator protein DnaA</fullName>
    </recommendedName>
</protein>
<sequence length="463" mass="52037">MQATNPIWAEVQQLLQKNLSKPSFETWIRPAKFNCFENGLLTLITPNNFTSDWLRKNYSETIEKAAEEICGHNVKVIFKSENNVNNNSNIPDTVSQQSIKSQTRSISTSQGNNTNNRTKKSHSLNIRYVFKRFVVGPNSRMAHAAALAVAESPGREFNPLFICGGVGLGKTHLMQAIGHYRVEIDPEAKVLYVSTETFSSDLIQSIRKDGMHVFKNKYRSVDLLLIDDIQFLEGKEYTQEEFFNTFNALYEAGKQIVIASDRPPSQIPKLQERLISRFSMGLIADIQPPDIETRMAILQKKAEQERMNLPRDLVQFIAGRFSSNIRELEGAFTRAVAFASITGLPMTVQSIAPMLDPNSVGVVVTPKQVIKKVSDFFSVTAEELVSSSRRKPVSQARQIGMYLMRQGTNLSLPKIGDEFGGKDHTTVMYAIEQVEKKLSSDPNVASQVQKIKDLLQIDSRKNL</sequence>
<feature type="chain" id="PRO_1000048688" description="Chromosomal replication initiator protein DnaA">
    <location>
        <begin position="1"/>
        <end position="463"/>
    </location>
</feature>
<feature type="region of interest" description="Domain I, interacts with DnaA modulators" evidence="1">
    <location>
        <begin position="1"/>
        <end position="79"/>
    </location>
</feature>
<feature type="region of interest" description="Domain II" evidence="1">
    <location>
        <begin position="79"/>
        <end position="122"/>
    </location>
</feature>
<feature type="region of interest" description="Disordered" evidence="2">
    <location>
        <begin position="87"/>
        <end position="118"/>
    </location>
</feature>
<feature type="region of interest" description="Domain III, AAA+ region" evidence="1">
    <location>
        <begin position="123"/>
        <end position="339"/>
    </location>
</feature>
<feature type="region of interest" description="Domain IV, binds dsDNA" evidence="1">
    <location>
        <begin position="340"/>
        <end position="463"/>
    </location>
</feature>
<feature type="compositionally biased region" description="Polar residues" evidence="2">
    <location>
        <begin position="90"/>
        <end position="116"/>
    </location>
</feature>
<feature type="binding site" evidence="1">
    <location>
        <position position="167"/>
    </location>
    <ligand>
        <name>ATP</name>
        <dbReference type="ChEBI" id="CHEBI:30616"/>
    </ligand>
</feature>
<feature type="binding site" evidence="1">
    <location>
        <position position="169"/>
    </location>
    <ligand>
        <name>ATP</name>
        <dbReference type="ChEBI" id="CHEBI:30616"/>
    </ligand>
</feature>
<feature type="binding site" evidence="1">
    <location>
        <position position="170"/>
    </location>
    <ligand>
        <name>ATP</name>
        <dbReference type="ChEBI" id="CHEBI:30616"/>
    </ligand>
</feature>
<feature type="binding site" evidence="1">
    <location>
        <position position="171"/>
    </location>
    <ligand>
        <name>ATP</name>
        <dbReference type="ChEBI" id="CHEBI:30616"/>
    </ligand>
</feature>